<proteinExistence type="evidence at transcript level"/>
<reference evidence="6" key="1">
    <citation type="journal article" date="2000" name="Science">
        <title>The genome sequence of Drosophila melanogaster.</title>
        <authorList>
            <person name="Adams M.D."/>
            <person name="Celniker S.E."/>
            <person name="Holt R.A."/>
            <person name="Evans C.A."/>
            <person name="Gocayne J.D."/>
            <person name="Amanatides P.G."/>
            <person name="Scherer S.E."/>
            <person name="Li P.W."/>
            <person name="Hoskins R.A."/>
            <person name="Galle R.F."/>
            <person name="George R.A."/>
            <person name="Lewis S.E."/>
            <person name="Richards S."/>
            <person name="Ashburner M."/>
            <person name="Henderson S.N."/>
            <person name="Sutton G.G."/>
            <person name="Wortman J.R."/>
            <person name="Yandell M.D."/>
            <person name="Zhang Q."/>
            <person name="Chen L.X."/>
            <person name="Brandon R.C."/>
            <person name="Rogers Y.-H.C."/>
            <person name="Blazej R.G."/>
            <person name="Champe M."/>
            <person name="Pfeiffer B.D."/>
            <person name="Wan K.H."/>
            <person name="Doyle C."/>
            <person name="Baxter E.G."/>
            <person name="Helt G."/>
            <person name="Nelson C.R."/>
            <person name="Miklos G.L.G."/>
            <person name="Abril J.F."/>
            <person name="Agbayani A."/>
            <person name="An H.-J."/>
            <person name="Andrews-Pfannkoch C."/>
            <person name="Baldwin D."/>
            <person name="Ballew R.M."/>
            <person name="Basu A."/>
            <person name="Baxendale J."/>
            <person name="Bayraktaroglu L."/>
            <person name="Beasley E.M."/>
            <person name="Beeson K.Y."/>
            <person name="Benos P.V."/>
            <person name="Berman B.P."/>
            <person name="Bhandari D."/>
            <person name="Bolshakov S."/>
            <person name="Borkova D."/>
            <person name="Botchan M.R."/>
            <person name="Bouck J."/>
            <person name="Brokstein P."/>
            <person name="Brottier P."/>
            <person name="Burtis K.C."/>
            <person name="Busam D.A."/>
            <person name="Butler H."/>
            <person name="Cadieu E."/>
            <person name="Center A."/>
            <person name="Chandra I."/>
            <person name="Cherry J.M."/>
            <person name="Cawley S."/>
            <person name="Dahlke C."/>
            <person name="Davenport L.B."/>
            <person name="Davies P."/>
            <person name="de Pablos B."/>
            <person name="Delcher A."/>
            <person name="Deng Z."/>
            <person name="Mays A.D."/>
            <person name="Dew I."/>
            <person name="Dietz S.M."/>
            <person name="Dodson K."/>
            <person name="Doup L.E."/>
            <person name="Downes M."/>
            <person name="Dugan-Rocha S."/>
            <person name="Dunkov B.C."/>
            <person name="Dunn P."/>
            <person name="Durbin K.J."/>
            <person name="Evangelista C.C."/>
            <person name="Ferraz C."/>
            <person name="Ferriera S."/>
            <person name="Fleischmann W."/>
            <person name="Fosler C."/>
            <person name="Gabrielian A.E."/>
            <person name="Garg N.S."/>
            <person name="Gelbart W.M."/>
            <person name="Glasser K."/>
            <person name="Glodek A."/>
            <person name="Gong F."/>
            <person name="Gorrell J.H."/>
            <person name="Gu Z."/>
            <person name="Guan P."/>
            <person name="Harris M."/>
            <person name="Harris N.L."/>
            <person name="Harvey D.A."/>
            <person name="Heiman T.J."/>
            <person name="Hernandez J.R."/>
            <person name="Houck J."/>
            <person name="Hostin D."/>
            <person name="Houston K.A."/>
            <person name="Howland T.J."/>
            <person name="Wei M.-H."/>
            <person name="Ibegwam C."/>
            <person name="Jalali M."/>
            <person name="Kalush F."/>
            <person name="Karpen G.H."/>
            <person name="Ke Z."/>
            <person name="Kennison J.A."/>
            <person name="Ketchum K.A."/>
            <person name="Kimmel B.E."/>
            <person name="Kodira C.D."/>
            <person name="Kraft C.L."/>
            <person name="Kravitz S."/>
            <person name="Kulp D."/>
            <person name="Lai Z."/>
            <person name="Lasko P."/>
            <person name="Lei Y."/>
            <person name="Levitsky A.A."/>
            <person name="Li J.H."/>
            <person name="Li Z."/>
            <person name="Liang Y."/>
            <person name="Lin X."/>
            <person name="Liu X."/>
            <person name="Mattei B."/>
            <person name="McIntosh T.C."/>
            <person name="McLeod M.P."/>
            <person name="McPherson D."/>
            <person name="Merkulov G."/>
            <person name="Milshina N.V."/>
            <person name="Mobarry C."/>
            <person name="Morris J."/>
            <person name="Moshrefi A."/>
            <person name="Mount S.M."/>
            <person name="Moy M."/>
            <person name="Murphy B."/>
            <person name="Murphy L."/>
            <person name="Muzny D.M."/>
            <person name="Nelson D.L."/>
            <person name="Nelson D.R."/>
            <person name="Nelson K.A."/>
            <person name="Nixon K."/>
            <person name="Nusskern D.R."/>
            <person name="Pacleb J.M."/>
            <person name="Palazzolo M."/>
            <person name="Pittman G.S."/>
            <person name="Pan S."/>
            <person name="Pollard J."/>
            <person name="Puri V."/>
            <person name="Reese M.G."/>
            <person name="Reinert K."/>
            <person name="Remington K."/>
            <person name="Saunders R.D.C."/>
            <person name="Scheeler F."/>
            <person name="Shen H."/>
            <person name="Shue B.C."/>
            <person name="Siden-Kiamos I."/>
            <person name="Simpson M."/>
            <person name="Skupski M.P."/>
            <person name="Smith T.J."/>
            <person name="Spier E."/>
            <person name="Spradling A.C."/>
            <person name="Stapleton M."/>
            <person name="Strong R."/>
            <person name="Sun E."/>
            <person name="Svirskas R."/>
            <person name="Tector C."/>
            <person name="Turner R."/>
            <person name="Venter E."/>
            <person name="Wang A.H."/>
            <person name="Wang X."/>
            <person name="Wang Z.-Y."/>
            <person name="Wassarman D.A."/>
            <person name="Weinstock G.M."/>
            <person name="Weissenbach J."/>
            <person name="Williams S.M."/>
            <person name="Woodage T."/>
            <person name="Worley K.C."/>
            <person name="Wu D."/>
            <person name="Yang S."/>
            <person name="Yao Q.A."/>
            <person name="Ye J."/>
            <person name="Yeh R.-F."/>
            <person name="Zaveri J.S."/>
            <person name="Zhan M."/>
            <person name="Zhang G."/>
            <person name="Zhao Q."/>
            <person name="Zheng L."/>
            <person name="Zheng X.H."/>
            <person name="Zhong F.N."/>
            <person name="Zhong W."/>
            <person name="Zhou X."/>
            <person name="Zhu S.C."/>
            <person name="Zhu X."/>
            <person name="Smith H.O."/>
            <person name="Gibbs R.A."/>
            <person name="Myers E.W."/>
            <person name="Rubin G.M."/>
            <person name="Venter J.C."/>
        </authorList>
    </citation>
    <scope>NUCLEOTIDE SEQUENCE [LARGE SCALE GENOMIC DNA]</scope>
    <source>
        <strain>Berkeley</strain>
    </source>
</reference>
<reference evidence="5 6" key="2">
    <citation type="journal article" date="2002" name="Genome Biol.">
        <title>Annotation of the Drosophila melanogaster euchromatic genome: a systematic review.</title>
        <authorList>
            <person name="Misra S."/>
            <person name="Crosby M.A."/>
            <person name="Mungall C.J."/>
            <person name="Matthews B.B."/>
            <person name="Campbell K.S."/>
            <person name="Hradecky P."/>
            <person name="Huang Y."/>
            <person name="Kaminker J.S."/>
            <person name="Millburn G.H."/>
            <person name="Prochnik S.E."/>
            <person name="Smith C.D."/>
            <person name="Tupy J.L."/>
            <person name="Whitfield E.J."/>
            <person name="Bayraktaroglu L."/>
            <person name="Berman B.P."/>
            <person name="Bettencourt B.R."/>
            <person name="Celniker S.E."/>
            <person name="de Grey A.D.N.J."/>
            <person name="Drysdale R.A."/>
            <person name="Harris N.L."/>
            <person name="Richter J."/>
            <person name="Russo S."/>
            <person name="Schroeder A.J."/>
            <person name="Shu S.Q."/>
            <person name="Stapleton M."/>
            <person name="Yamada C."/>
            <person name="Ashburner M."/>
            <person name="Gelbart W.M."/>
            <person name="Rubin G.M."/>
            <person name="Lewis S.E."/>
        </authorList>
    </citation>
    <scope>GENOME REANNOTATION</scope>
    <source>
        <strain>Berkeley</strain>
    </source>
</reference>
<reference evidence="7" key="3">
    <citation type="submission" date="2003-08" db="EMBL/GenBank/DDBJ databases">
        <authorList>
            <person name="Stapleton M."/>
            <person name="Brokstein P."/>
            <person name="Hong L."/>
            <person name="Agbayani A."/>
            <person name="Carlson J.W."/>
            <person name="Champe M."/>
            <person name="Chavez C."/>
            <person name="Dorsett V."/>
            <person name="Dresnek D."/>
            <person name="Farfan D."/>
            <person name="Frise E."/>
            <person name="George R.A."/>
            <person name="Gonzalez M."/>
            <person name="Guarin H."/>
            <person name="Kronmiller B."/>
            <person name="Li P.W."/>
            <person name="Liao G."/>
            <person name="Miranda A."/>
            <person name="Mungall C.J."/>
            <person name="Nunoo J."/>
            <person name="Pacleb J.M."/>
            <person name="Paragas V."/>
            <person name="Park S."/>
            <person name="Patel S."/>
            <person name="Phouanenavong S."/>
            <person name="Wan K.H."/>
            <person name="Yu C."/>
            <person name="Lewis S.E."/>
            <person name="Rubin G.M."/>
            <person name="Celniker S.E."/>
        </authorList>
    </citation>
    <scope>NUCLEOTIDE SEQUENCE [LARGE SCALE MRNA]</scope>
    <source>
        <strain evidence="7">Berkeley</strain>
    </source>
</reference>
<reference evidence="5" key="4">
    <citation type="journal article" date="2008" name="Development">
        <title>Post-meiotic transcription in Drosophila testes.</title>
        <authorList>
            <person name="Barreau C."/>
            <person name="Benson E."/>
            <person name="Gudmannsdottir E."/>
            <person name="Newton F."/>
            <person name="White-Cooper H."/>
        </authorList>
    </citation>
    <scope>FUNCTION</scope>
    <scope>TISSUE SPECIFICITY</scope>
    <scope>DISRUPTION PHENOTYPE</scope>
</reference>
<keyword id="KW-0217">Developmental protein</keyword>
<keyword id="KW-0221">Differentiation</keyword>
<keyword id="KW-0325">Glycoprotein</keyword>
<keyword id="KW-1185">Reference proteome</keyword>
<keyword id="KW-0744">Spermatogenesis</keyword>
<evidence type="ECO:0000255" key="1"/>
<evidence type="ECO:0000256" key="2">
    <source>
        <dbReference type="SAM" id="MobiDB-lite"/>
    </source>
</evidence>
<evidence type="ECO:0000269" key="3">
    <source>
    </source>
</evidence>
<evidence type="ECO:0000303" key="4">
    <source>
    </source>
</evidence>
<evidence type="ECO:0000305" key="5"/>
<evidence type="ECO:0000312" key="6">
    <source>
        <dbReference type="EMBL" id="AAF55052.1"/>
    </source>
</evidence>
<evidence type="ECO:0000312" key="7">
    <source>
        <dbReference type="EMBL" id="AAL28298.1"/>
    </source>
</evidence>
<dbReference type="EMBL" id="AE014297">
    <property type="protein sequence ID" value="AAF55052.1"/>
    <property type="molecule type" value="Genomic_DNA"/>
</dbReference>
<dbReference type="EMBL" id="AY060750">
    <property type="protein sequence ID" value="AAL28298.1"/>
    <property type="molecule type" value="mRNA"/>
</dbReference>
<dbReference type="RefSeq" id="NP_650358.1">
    <property type="nucleotide sequence ID" value="NM_142101.3"/>
</dbReference>
<dbReference type="BioGRID" id="66824">
    <property type="interactions" value="4"/>
</dbReference>
<dbReference type="FunCoup" id="Q9VFK3">
    <property type="interactions" value="2"/>
</dbReference>
<dbReference type="STRING" id="7227.FBpp0082399"/>
<dbReference type="GlyCosmos" id="Q9VFK3">
    <property type="glycosylation" value="1 site, No reported glycans"/>
</dbReference>
<dbReference type="GlyGen" id="Q9VFK3">
    <property type="glycosylation" value="1 site"/>
</dbReference>
<dbReference type="PaxDb" id="7227-FBpp0082399"/>
<dbReference type="DNASU" id="41748"/>
<dbReference type="EnsemblMetazoa" id="FBtr0082940">
    <property type="protein sequence ID" value="FBpp0082399"/>
    <property type="gene ID" value="FBgn0038225"/>
</dbReference>
<dbReference type="GeneID" id="41748"/>
<dbReference type="KEGG" id="dme:Dmel_CG8489"/>
<dbReference type="UCSC" id="CG8489-RA">
    <property type="organism name" value="d. melanogaster"/>
</dbReference>
<dbReference type="AGR" id="FB:FBgn0038225"/>
<dbReference type="CTD" id="41748"/>
<dbReference type="FlyBase" id="FBgn0038225">
    <property type="gene designation" value="soti"/>
</dbReference>
<dbReference type="VEuPathDB" id="VectorBase:FBgn0038225"/>
<dbReference type="HOGENOM" id="CLU_120156_0_0_1"/>
<dbReference type="InParanoid" id="Q9VFK3"/>
<dbReference type="OMA" id="LPQRWGQ"/>
<dbReference type="OrthoDB" id="7867455at2759"/>
<dbReference type="PhylomeDB" id="Q9VFK3"/>
<dbReference type="BioGRID-ORCS" id="41748">
    <property type="hits" value="0 hits in 1 CRISPR screen"/>
</dbReference>
<dbReference type="GenomeRNAi" id="41748"/>
<dbReference type="PRO" id="PR:Q9VFK3"/>
<dbReference type="Proteomes" id="UP000000803">
    <property type="component" value="Chromosome 3R"/>
</dbReference>
<dbReference type="Bgee" id="FBgn0038225">
    <property type="expression patterns" value="Expressed in mid-late elongation-stage spermatid (Drosophila) in testis and 33 other cell types or tissues"/>
</dbReference>
<dbReference type="ExpressionAtlas" id="Q9VFK3">
    <property type="expression patterns" value="baseline and differential"/>
</dbReference>
<dbReference type="GO" id="GO:0007291">
    <property type="term" value="P:sperm individualization"/>
    <property type="evidence" value="ECO:0000315"/>
    <property type="project" value="UniProtKB"/>
</dbReference>
<dbReference type="InterPro" id="IPR031397">
    <property type="entry name" value="Soti"/>
</dbReference>
<dbReference type="Pfam" id="PF17079">
    <property type="entry name" value="SOTI"/>
    <property type="match status" value="1"/>
</dbReference>
<comment type="function">
    <text evidence="3">Post-meiotically transcribed gene that has a role in late spermiogenesis; required for actin cone progression during spermatid individualization.</text>
</comment>
<comment type="tissue specificity">
    <text evidence="3">Expressed in primary spermatocytes and round spermatids. Low expression is seen in very short elongating cysts, but were detected at high levels in a few longer spermatid cysts.</text>
</comment>
<comment type="disruption phenotype">
    <text evidence="3">Male sterile showing spermatid individualization defects. No gross defects seen in testis organization or spermatid elongation but the seminal vesicles are empty.</text>
</comment>
<comment type="similarity">
    <text evidence="5">Belongs to the male-specific scotti family.</text>
</comment>
<organism>
    <name type="scientific">Drosophila melanogaster</name>
    <name type="common">Fruit fly</name>
    <dbReference type="NCBI Taxonomy" id="7227"/>
    <lineage>
        <taxon>Eukaryota</taxon>
        <taxon>Metazoa</taxon>
        <taxon>Ecdysozoa</taxon>
        <taxon>Arthropoda</taxon>
        <taxon>Hexapoda</taxon>
        <taxon>Insecta</taxon>
        <taxon>Pterygota</taxon>
        <taxon>Neoptera</taxon>
        <taxon>Endopterygota</taxon>
        <taxon>Diptera</taxon>
        <taxon>Brachycera</taxon>
        <taxon>Muscomorpha</taxon>
        <taxon>Ephydroidea</taxon>
        <taxon>Drosophilidae</taxon>
        <taxon>Drosophila</taxon>
        <taxon>Sophophora</taxon>
    </lineage>
</organism>
<gene>
    <name evidence="4" type="primary">soti</name>
    <name type="ORF">CG8489</name>
</gene>
<name>SOTI_DROME</name>
<sequence length="147" mass="16714">MDVLHGHDLYDEQLIDRVGDAVNEDAGDDLDTLEDGQQQQRLGVNRQMDILLDAPQEPPLGVFPAQGGPNGPPRRRKKRSFYTMTKPTPPCQSQEPEMCLLMASVTRAMRHVREDQRGEYFANYLVENMTSQNYPNGMGLPQHWGQF</sequence>
<feature type="chain" id="PRO_0000379443" description="Male-specific protein scotti">
    <location>
        <begin position="1"/>
        <end position="147"/>
    </location>
</feature>
<feature type="region of interest" description="Disordered" evidence="2">
    <location>
        <begin position="55"/>
        <end position="93"/>
    </location>
</feature>
<feature type="compositionally biased region" description="Polar residues" evidence="2">
    <location>
        <begin position="82"/>
        <end position="93"/>
    </location>
</feature>
<feature type="glycosylation site" description="N-linked (GlcNAc...) asparagine" evidence="1">
    <location>
        <position position="128"/>
    </location>
</feature>
<accession>Q9VFK3</accession>
<protein>
    <recommendedName>
        <fullName evidence="4">Male-specific protein scotti</fullName>
    </recommendedName>
</protein>